<gene>
    <name evidence="1" type="primary">rps3</name>
    <name type="ordered locus">MJ0461</name>
</gene>
<keyword id="KW-1185">Reference proteome</keyword>
<keyword id="KW-0687">Ribonucleoprotein</keyword>
<keyword id="KW-0689">Ribosomal protein</keyword>
<keyword id="KW-0694">RNA-binding</keyword>
<keyword id="KW-0699">rRNA-binding</keyword>
<proteinExistence type="inferred from homology"/>
<reference key="1">
    <citation type="journal article" date="1996" name="Science">
        <title>Complete genome sequence of the methanogenic archaeon, Methanococcus jannaschii.</title>
        <authorList>
            <person name="Bult C.J."/>
            <person name="White O."/>
            <person name="Olsen G.J."/>
            <person name="Zhou L."/>
            <person name="Fleischmann R.D."/>
            <person name="Sutton G.G."/>
            <person name="Blake J.A."/>
            <person name="FitzGerald L.M."/>
            <person name="Clayton R.A."/>
            <person name="Gocayne J.D."/>
            <person name="Kerlavage A.R."/>
            <person name="Dougherty B.A."/>
            <person name="Tomb J.-F."/>
            <person name="Adams M.D."/>
            <person name="Reich C.I."/>
            <person name="Overbeek R."/>
            <person name="Kirkness E.F."/>
            <person name="Weinstock K.G."/>
            <person name="Merrick J.M."/>
            <person name="Glodek A."/>
            <person name="Scott J.L."/>
            <person name="Geoghagen N.S.M."/>
            <person name="Weidman J.F."/>
            <person name="Fuhrmann J.L."/>
            <person name="Nguyen D."/>
            <person name="Utterback T.R."/>
            <person name="Kelley J.M."/>
            <person name="Peterson J.D."/>
            <person name="Sadow P.W."/>
            <person name="Hanna M.C."/>
            <person name="Cotton M.D."/>
            <person name="Roberts K.M."/>
            <person name="Hurst M.A."/>
            <person name="Kaine B.P."/>
            <person name="Borodovsky M."/>
            <person name="Klenk H.-P."/>
            <person name="Fraser C.M."/>
            <person name="Smith H.O."/>
            <person name="Woese C.R."/>
            <person name="Venter J.C."/>
        </authorList>
    </citation>
    <scope>NUCLEOTIDE SEQUENCE [LARGE SCALE GENOMIC DNA]</scope>
    <source>
        <strain>ATCC 43067 / DSM 2661 / JAL-1 / JCM 10045 / NBRC 100440</strain>
    </source>
</reference>
<feature type="chain" id="PRO_0000130250" description="Small ribosomal subunit protein uS3">
    <location>
        <begin position="1"/>
        <end position="208"/>
    </location>
</feature>
<feature type="domain" description="KH type-2" evidence="1">
    <location>
        <begin position="16"/>
        <end position="85"/>
    </location>
</feature>
<protein>
    <recommendedName>
        <fullName evidence="1">Small ribosomal subunit protein uS3</fullName>
    </recommendedName>
    <alternativeName>
        <fullName evidence="2">30S ribosomal protein S3</fullName>
    </alternativeName>
</protein>
<accession>P54034</accession>
<name>RS3_METJA</name>
<organism>
    <name type="scientific">Methanocaldococcus jannaschii (strain ATCC 43067 / DSM 2661 / JAL-1 / JCM 10045 / NBRC 100440)</name>
    <name type="common">Methanococcus jannaschii</name>
    <dbReference type="NCBI Taxonomy" id="243232"/>
    <lineage>
        <taxon>Archaea</taxon>
        <taxon>Methanobacteriati</taxon>
        <taxon>Methanobacteriota</taxon>
        <taxon>Methanomada group</taxon>
        <taxon>Methanococci</taxon>
        <taxon>Methanococcales</taxon>
        <taxon>Methanocaldococcaceae</taxon>
        <taxon>Methanocaldococcus</taxon>
    </lineage>
</organism>
<comment type="function">
    <text evidence="1">Binds the lower part of the 30S subunit head.</text>
</comment>
<comment type="subunit">
    <text evidence="1">Part of the 30S ribosomal subunit.</text>
</comment>
<comment type="similarity">
    <text evidence="1">Belongs to the universal ribosomal protein uS3 family.</text>
</comment>
<sequence>MIERTFVKENVKRLLIDEYFKKELSKAGYSHCDIRKTPIGTKIIIYAEKPGFVIGRRGSRIRELTETLAKEFGVEKPQIDVKPVENPDLDAQVVAQKVAQSLERGLHFRRVGHTAVRRVMNAGAKGVIVIISGKLTGERARTEKFMAGYMKHCGEPAEELVDKGRAIAKTKPGVIGVTVKIMRPDVLLPDEIIIKEDAEVKHVVEEEQ</sequence>
<evidence type="ECO:0000255" key="1">
    <source>
        <dbReference type="HAMAP-Rule" id="MF_01309"/>
    </source>
</evidence>
<evidence type="ECO:0000305" key="2"/>
<dbReference type="EMBL" id="L77117">
    <property type="protein sequence ID" value="AAB98450.1"/>
    <property type="molecule type" value="Genomic_DNA"/>
</dbReference>
<dbReference type="PIR" id="E64357">
    <property type="entry name" value="E64357"/>
</dbReference>
<dbReference type="RefSeq" id="WP_010869961.1">
    <property type="nucleotide sequence ID" value="NC_000909.1"/>
</dbReference>
<dbReference type="SMR" id="P54034"/>
<dbReference type="FunCoup" id="P54034">
    <property type="interactions" value="187"/>
</dbReference>
<dbReference type="STRING" id="243232.MJ_0461"/>
<dbReference type="PaxDb" id="243232-MJ_0461"/>
<dbReference type="EnsemblBacteria" id="AAB98450">
    <property type="protein sequence ID" value="AAB98450"/>
    <property type="gene ID" value="MJ_0461"/>
</dbReference>
<dbReference type="GeneID" id="1451323"/>
<dbReference type="KEGG" id="mja:MJ_0461"/>
<dbReference type="eggNOG" id="arCOG04097">
    <property type="taxonomic scope" value="Archaea"/>
</dbReference>
<dbReference type="HOGENOM" id="CLU_058591_1_1_2"/>
<dbReference type="InParanoid" id="P54034"/>
<dbReference type="OrthoDB" id="9126at2157"/>
<dbReference type="PhylomeDB" id="P54034"/>
<dbReference type="Proteomes" id="UP000000805">
    <property type="component" value="Chromosome"/>
</dbReference>
<dbReference type="GO" id="GO:0022627">
    <property type="term" value="C:cytosolic small ribosomal subunit"/>
    <property type="evidence" value="ECO:0000318"/>
    <property type="project" value="GO_Central"/>
</dbReference>
<dbReference type="GO" id="GO:0019843">
    <property type="term" value="F:rRNA binding"/>
    <property type="evidence" value="ECO:0007669"/>
    <property type="project" value="UniProtKB-UniRule"/>
</dbReference>
<dbReference type="GO" id="GO:0003735">
    <property type="term" value="F:structural constituent of ribosome"/>
    <property type="evidence" value="ECO:0000318"/>
    <property type="project" value="GO_Central"/>
</dbReference>
<dbReference type="GO" id="GO:0006412">
    <property type="term" value="P:translation"/>
    <property type="evidence" value="ECO:0007669"/>
    <property type="project" value="UniProtKB-UniRule"/>
</dbReference>
<dbReference type="CDD" id="cd02411">
    <property type="entry name" value="KH-II_30S_S3_arch"/>
    <property type="match status" value="1"/>
</dbReference>
<dbReference type="FunFam" id="3.30.1140.32:FF:000012">
    <property type="entry name" value="30S ribosomal protein S3"/>
    <property type="match status" value="1"/>
</dbReference>
<dbReference type="FunFam" id="3.30.300.20:FF:000001">
    <property type="entry name" value="30S ribosomal protein S3"/>
    <property type="match status" value="1"/>
</dbReference>
<dbReference type="Gene3D" id="3.30.300.20">
    <property type="match status" value="1"/>
</dbReference>
<dbReference type="Gene3D" id="3.30.1140.32">
    <property type="entry name" value="Ribosomal protein S3, C-terminal domain"/>
    <property type="match status" value="1"/>
</dbReference>
<dbReference type="HAMAP" id="MF_01309_A">
    <property type="entry name" value="Ribosomal_uS3_A"/>
    <property type="match status" value="1"/>
</dbReference>
<dbReference type="InterPro" id="IPR004087">
    <property type="entry name" value="KH_dom"/>
</dbReference>
<dbReference type="InterPro" id="IPR015946">
    <property type="entry name" value="KH_dom-like_a/b"/>
</dbReference>
<dbReference type="InterPro" id="IPR004044">
    <property type="entry name" value="KH_dom_type_2"/>
</dbReference>
<dbReference type="InterPro" id="IPR009019">
    <property type="entry name" value="KH_sf_prok-type"/>
</dbReference>
<dbReference type="InterPro" id="IPR036419">
    <property type="entry name" value="Ribosomal_S3_C_sf"/>
</dbReference>
<dbReference type="InterPro" id="IPR027488">
    <property type="entry name" value="Ribosomal_uS3_arc"/>
</dbReference>
<dbReference type="InterPro" id="IPR001351">
    <property type="entry name" value="Ribosomal_uS3_C"/>
</dbReference>
<dbReference type="InterPro" id="IPR018280">
    <property type="entry name" value="Ribosomal_uS3_CS"/>
</dbReference>
<dbReference type="InterPro" id="IPR005703">
    <property type="entry name" value="Ribosomal_uS3_euk/arc"/>
</dbReference>
<dbReference type="NCBIfam" id="NF003219">
    <property type="entry name" value="PRK04191.1"/>
    <property type="match status" value="1"/>
</dbReference>
<dbReference type="NCBIfam" id="TIGR01008">
    <property type="entry name" value="uS3_euk_arch"/>
    <property type="match status" value="1"/>
</dbReference>
<dbReference type="PANTHER" id="PTHR11760">
    <property type="entry name" value="30S/40S RIBOSOMAL PROTEIN S3"/>
    <property type="match status" value="1"/>
</dbReference>
<dbReference type="PANTHER" id="PTHR11760:SF32">
    <property type="entry name" value="SMALL RIBOSOMAL SUBUNIT PROTEIN US3"/>
    <property type="match status" value="1"/>
</dbReference>
<dbReference type="Pfam" id="PF07650">
    <property type="entry name" value="KH_2"/>
    <property type="match status" value="1"/>
</dbReference>
<dbReference type="Pfam" id="PF00189">
    <property type="entry name" value="Ribosomal_S3_C"/>
    <property type="match status" value="1"/>
</dbReference>
<dbReference type="SMART" id="SM00322">
    <property type="entry name" value="KH"/>
    <property type="match status" value="1"/>
</dbReference>
<dbReference type="SUPFAM" id="SSF54814">
    <property type="entry name" value="Prokaryotic type KH domain (KH-domain type II)"/>
    <property type="match status" value="1"/>
</dbReference>
<dbReference type="SUPFAM" id="SSF54821">
    <property type="entry name" value="Ribosomal protein S3 C-terminal domain"/>
    <property type="match status" value="1"/>
</dbReference>
<dbReference type="PROSITE" id="PS50823">
    <property type="entry name" value="KH_TYPE_2"/>
    <property type="match status" value="1"/>
</dbReference>
<dbReference type="PROSITE" id="PS00548">
    <property type="entry name" value="RIBOSOMAL_S3"/>
    <property type="match status" value="1"/>
</dbReference>